<name>NDHK_HORVU</name>
<reference key="1">
    <citation type="submission" date="2003-02" db="EMBL/GenBank/DDBJ databases">
        <title>Barley chloroplast ndhC,K,J operon.</title>
        <authorList>
            <person name="Serrot P.H."/>
            <person name="Sabater B."/>
            <person name="Martin M."/>
        </authorList>
    </citation>
    <scope>NUCLEOTIDE SEQUENCE [GENOMIC DNA]</scope>
    <source>
        <strain>cv. Hassan</strain>
    </source>
</reference>
<reference key="2">
    <citation type="journal article" date="2007" name="Theor. Appl. Genet.">
        <title>Complete chloroplast genome sequences of Hordeum vulgare, Sorghum bicolor and Agrostis stolonifera, and comparative analyses with other grass genomes.</title>
        <authorList>
            <person name="Saski C."/>
            <person name="Lee S.-B."/>
            <person name="Fjellheim S."/>
            <person name="Guda C."/>
            <person name="Jansen R.K."/>
            <person name="Luo H."/>
            <person name="Tomkins J."/>
            <person name="Rognli O.A."/>
            <person name="Daniell H."/>
            <person name="Clarke J.L."/>
        </authorList>
    </citation>
    <scope>NUCLEOTIDE SEQUENCE [LARGE SCALE GENOMIC DNA]</scope>
    <source>
        <strain>cv. Morex</strain>
    </source>
</reference>
<reference key="3">
    <citation type="journal article" date="2004" name="Biochem. J.">
        <title>Topology of the plastid Ndh complex and its NDH-F subunit in thylakoid membranes.</title>
        <authorList>
            <person name="Casano L.M."/>
            <person name="Lascano H.R."/>
            <person name="Martin M."/>
            <person name="Sabater B."/>
        </authorList>
    </citation>
    <scope>SUBCELLULAR LOCATION</scope>
    <scope>TOPOLOGY</scope>
    <source>
        <strain>cv. Hassan</strain>
    </source>
</reference>
<evidence type="ECO:0000255" key="1">
    <source>
        <dbReference type="HAMAP-Rule" id="MF_01356"/>
    </source>
</evidence>
<evidence type="ECO:0000305" key="2"/>
<organism>
    <name type="scientific">Hordeum vulgare</name>
    <name type="common">Barley</name>
    <dbReference type="NCBI Taxonomy" id="4513"/>
    <lineage>
        <taxon>Eukaryota</taxon>
        <taxon>Viridiplantae</taxon>
        <taxon>Streptophyta</taxon>
        <taxon>Embryophyta</taxon>
        <taxon>Tracheophyta</taxon>
        <taxon>Spermatophyta</taxon>
        <taxon>Magnoliopsida</taxon>
        <taxon>Liliopsida</taxon>
        <taxon>Poales</taxon>
        <taxon>Poaceae</taxon>
        <taxon>BOP clade</taxon>
        <taxon>Pooideae</taxon>
        <taxon>Triticodae</taxon>
        <taxon>Triticeae</taxon>
        <taxon>Hordeinae</taxon>
        <taxon>Hordeum</taxon>
    </lineage>
</organism>
<comment type="function">
    <text evidence="1">NDH shuttles electrons from NAD(P)H:plastoquinone, via FMN and iron-sulfur (Fe-S) centers, to quinones in the photosynthetic chain and possibly in a chloroplast respiratory chain. The immediate electron acceptor for the enzyme in this species is believed to be plastoquinone. Couples the redox reaction to proton translocation, and thus conserves the redox energy in a proton gradient.</text>
</comment>
<comment type="catalytic activity">
    <reaction evidence="1">
        <text>a plastoquinone + NADH + (n+1) H(+)(in) = a plastoquinol + NAD(+) + n H(+)(out)</text>
        <dbReference type="Rhea" id="RHEA:42608"/>
        <dbReference type="Rhea" id="RHEA-COMP:9561"/>
        <dbReference type="Rhea" id="RHEA-COMP:9562"/>
        <dbReference type="ChEBI" id="CHEBI:15378"/>
        <dbReference type="ChEBI" id="CHEBI:17757"/>
        <dbReference type="ChEBI" id="CHEBI:57540"/>
        <dbReference type="ChEBI" id="CHEBI:57945"/>
        <dbReference type="ChEBI" id="CHEBI:62192"/>
    </reaction>
</comment>
<comment type="catalytic activity">
    <reaction evidence="1">
        <text>a plastoquinone + NADPH + (n+1) H(+)(in) = a plastoquinol + NADP(+) + n H(+)(out)</text>
        <dbReference type="Rhea" id="RHEA:42612"/>
        <dbReference type="Rhea" id="RHEA-COMP:9561"/>
        <dbReference type="Rhea" id="RHEA-COMP:9562"/>
        <dbReference type="ChEBI" id="CHEBI:15378"/>
        <dbReference type="ChEBI" id="CHEBI:17757"/>
        <dbReference type="ChEBI" id="CHEBI:57783"/>
        <dbReference type="ChEBI" id="CHEBI:58349"/>
        <dbReference type="ChEBI" id="CHEBI:62192"/>
    </reaction>
</comment>
<comment type="cofactor">
    <cofactor evidence="1">
        <name>[4Fe-4S] cluster</name>
        <dbReference type="ChEBI" id="CHEBI:49883"/>
    </cofactor>
    <text evidence="1">Binds 1 [4Fe-4S] cluster.</text>
</comment>
<comment type="subunit">
    <text evidence="1">NDH is composed of at least 16 different subunits, 5 of which are encoded in the nucleus.</text>
</comment>
<comment type="subcellular location">
    <subcellularLocation>
        <location evidence="1">Plastid</location>
        <location evidence="1">Chloroplast thylakoid membrane</location>
        <topology evidence="1">Peripheral membrane protein</topology>
        <orientation evidence="1">Stromal side</orientation>
    </subcellularLocation>
</comment>
<comment type="similarity">
    <text evidence="1">Belongs to the complex I 20 kDa subunit family.</text>
</comment>
<comment type="sequence caution" evidence="2">
    <conflict type="erroneous initiation">
        <sequence resource="EMBL-CDS" id="AAO72306"/>
    </conflict>
</comment>
<comment type="sequence caution" evidence="2">
    <conflict type="erroneous initiation">
        <sequence resource="EMBL-CDS" id="ABK79417"/>
    </conflict>
</comment>
<sequence>MNLIEFPLLDQTSSNSVISTTLNDLSNWSRLSSLWPLLYGTSCCFIEFASLIGSRFDFDRYGLVPRSSPRQADLILTAGTVTMKMAPSLVRLYEQMPEPKYVIAMGACTITGGMFSTDSYSTVRGVDKLIPVDVYLPGCPPKPEAVIDALTKLRKKISREIVEDRTLSQNKKRCFTTSHKLYVRRSTHTGTYEQELLYQSPSTLDISSETFLKSKSPVPSYKLVN</sequence>
<accession>Q85XC3</accession>
<accession>A1E9J5</accession>
<keyword id="KW-0004">4Fe-4S</keyword>
<keyword id="KW-0150">Chloroplast</keyword>
<keyword id="KW-0408">Iron</keyword>
<keyword id="KW-0411">Iron-sulfur</keyword>
<keyword id="KW-0472">Membrane</keyword>
<keyword id="KW-0479">Metal-binding</keyword>
<keyword id="KW-0520">NAD</keyword>
<keyword id="KW-0521">NADP</keyword>
<keyword id="KW-0934">Plastid</keyword>
<keyword id="KW-0618">Plastoquinone</keyword>
<keyword id="KW-0874">Quinone</keyword>
<keyword id="KW-0793">Thylakoid</keyword>
<keyword id="KW-1278">Translocase</keyword>
<keyword id="KW-0813">Transport</keyword>
<proteinExistence type="evidence at protein level"/>
<protein>
    <recommendedName>
        <fullName evidence="1">NAD(P)H-quinone oxidoreductase subunit K, chloroplastic</fullName>
        <ecNumber evidence="1">7.1.1.-</ecNumber>
    </recommendedName>
    <alternativeName>
        <fullName evidence="1">NAD(P)H dehydrogenase subunit K</fullName>
    </alternativeName>
    <alternativeName>
        <fullName evidence="1">NADH-plastoquinone oxidoreductase subunit K</fullName>
    </alternativeName>
</protein>
<feature type="chain" id="PRO_0000358549" description="NAD(P)H-quinone oxidoreductase subunit K, chloroplastic">
    <location>
        <begin position="1"/>
        <end position="225"/>
    </location>
</feature>
<feature type="binding site" evidence="1">
    <location>
        <position position="43"/>
    </location>
    <ligand>
        <name>[4Fe-4S] cluster</name>
        <dbReference type="ChEBI" id="CHEBI:49883"/>
    </ligand>
</feature>
<feature type="binding site" evidence="1">
    <location>
        <position position="44"/>
    </location>
    <ligand>
        <name>[4Fe-4S] cluster</name>
        <dbReference type="ChEBI" id="CHEBI:49883"/>
    </ligand>
</feature>
<feature type="binding site" evidence="1">
    <location>
        <position position="108"/>
    </location>
    <ligand>
        <name>[4Fe-4S] cluster</name>
        <dbReference type="ChEBI" id="CHEBI:49883"/>
    </ligand>
</feature>
<feature type="binding site" evidence="1">
    <location>
        <position position="139"/>
    </location>
    <ligand>
        <name>[4Fe-4S] cluster</name>
        <dbReference type="ChEBI" id="CHEBI:49883"/>
    </ligand>
</feature>
<geneLocation type="chloroplast"/>
<gene>
    <name evidence="1" type="primary">ndhK</name>
</gene>
<dbReference type="EC" id="7.1.1.-" evidence="1"/>
<dbReference type="EMBL" id="AY243565">
    <property type="protein sequence ID" value="AAO72306.1"/>
    <property type="status" value="ALT_INIT"/>
    <property type="molecule type" value="Genomic_DNA"/>
</dbReference>
<dbReference type="EMBL" id="EF115541">
    <property type="protein sequence ID" value="ABK79417.1"/>
    <property type="status" value="ALT_INIT"/>
    <property type="molecule type" value="Genomic_DNA"/>
</dbReference>
<dbReference type="SMR" id="Q85XC3"/>
<dbReference type="OMA" id="GGIWHDT"/>
<dbReference type="GO" id="GO:0009535">
    <property type="term" value="C:chloroplast thylakoid membrane"/>
    <property type="evidence" value="ECO:0007669"/>
    <property type="project" value="UniProtKB-SubCell"/>
</dbReference>
<dbReference type="GO" id="GO:0045271">
    <property type="term" value="C:respiratory chain complex I"/>
    <property type="evidence" value="ECO:0007669"/>
    <property type="project" value="TreeGrafter"/>
</dbReference>
<dbReference type="GO" id="GO:0051539">
    <property type="term" value="F:4 iron, 4 sulfur cluster binding"/>
    <property type="evidence" value="ECO:0007669"/>
    <property type="project" value="UniProtKB-KW"/>
</dbReference>
<dbReference type="GO" id="GO:0005506">
    <property type="term" value="F:iron ion binding"/>
    <property type="evidence" value="ECO:0007669"/>
    <property type="project" value="UniProtKB-UniRule"/>
</dbReference>
<dbReference type="GO" id="GO:0008137">
    <property type="term" value="F:NADH dehydrogenase (ubiquinone) activity"/>
    <property type="evidence" value="ECO:0007669"/>
    <property type="project" value="InterPro"/>
</dbReference>
<dbReference type="GO" id="GO:0048038">
    <property type="term" value="F:quinone binding"/>
    <property type="evidence" value="ECO:0007669"/>
    <property type="project" value="UniProtKB-KW"/>
</dbReference>
<dbReference type="GO" id="GO:0009060">
    <property type="term" value="P:aerobic respiration"/>
    <property type="evidence" value="ECO:0007669"/>
    <property type="project" value="TreeGrafter"/>
</dbReference>
<dbReference type="GO" id="GO:0015990">
    <property type="term" value="P:electron transport coupled proton transport"/>
    <property type="evidence" value="ECO:0007669"/>
    <property type="project" value="TreeGrafter"/>
</dbReference>
<dbReference type="GO" id="GO:0019684">
    <property type="term" value="P:photosynthesis, light reaction"/>
    <property type="evidence" value="ECO:0007669"/>
    <property type="project" value="UniProtKB-UniRule"/>
</dbReference>
<dbReference type="FunFam" id="3.40.50.12280:FF:000003">
    <property type="entry name" value="NAD(P)H-quinone oxidoreductase subunit K, chloroplastic"/>
    <property type="match status" value="1"/>
</dbReference>
<dbReference type="Gene3D" id="3.40.50.12280">
    <property type="match status" value="1"/>
</dbReference>
<dbReference type="HAMAP" id="MF_01356">
    <property type="entry name" value="NDH1_NuoB"/>
    <property type="match status" value="1"/>
</dbReference>
<dbReference type="InterPro" id="IPR006137">
    <property type="entry name" value="NADH_UbQ_OxRdtase-like_20kDa"/>
</dbReference>
<dbReference type="InterPro" id="IPR006138">
    <property type="entry name" value="NADH_UQ_OxRdtase_20Kd_su"/>
</dbReference>
<dbReference type="NCBIfam" id="TIGR01957">
    <property type="entry name" value="nuoB_fam"/>
    <property type="match status" value="1"/>
</dbReference>
<dbReference type="NCBIfam" id="NF005012">
    <property type="entry name" value="PRK06411.1"/>
    <property type="match status" value="1"/>
</dbReference>
<dbReference type="PANTHER" id="PTHR11995">
    <property type="entry name" value="NADH DEHYDROGENASE"/>
    <property type="match status" value="1"/>
</dbReference>
<dbReference type="PANTHER" id="PTHR11995:SF14">
    <property type="entry name" value="NADH DEHYDROGENASE [UBIQUINONE] IRON-SULFUR PROTEIN 7, MITOCHONDRIAL"/>
    <property type="match status" value="1"/>
</dbReference>
<dbReference type="Pfam" id="PF01058">
    <property type="entry name" value="Oxidored_q6"/>
    <property type="match status" value="1"/>
</dbReference>
<dbReference type="SUPFAM" id="SSF56770">
    <property type="entry name" value="HydA/Nqo6-like"/>
    <property type="match status" value="1"/>
</dbReference>
<dbReference type="PROSITE" id="PS01150">
    <property type="entry name" value="COMPLEX1_20K"/>
    <property type="match status" value="1"/>
</dbReference>